<organism>
    <name type="scientific">Salmonella typhimurium (strain LT2 / SGSC1412 / ATCC 700720)</name>
    <dbReference type="NCBI Taxonomy" id="99287"/>
    <lineage>
        <taxon>Bacteria</taxon>
        <taxon>Pseudomonadati</taxon>
        <taxon>Pseudomonadota</taxon>
        <taxon>Gammaproteobacteria</taxon>
        <taxon>Enterobacterales</taxon>
        <taxon>Enterobacteriaceae</taxon>
        <taxon>Salmonella</taxon>
    </lineage>
</organism>
<gene>
    <name type="primary">rpmF</name>
    <name type="ordered locus">STM1191</name>
</gene>
<feature type="initiator methionine" description="Removed" evidence="1">
    <location>
        <position position="1"/>
    </location>
</feature>
<feature type="chain" id="PRO_0000172399" description="Large ribosomal subunit protein bL32">
    <location>
        <begin position="2"/>
        <end position="57"/>
    </location>
</feature>
<feature type="region of interest" description="Disordered" evidence="2">
    <location>
        <begin position="1"/>
        <end position="38"/>
    </location>
</feature>
<dbReference type="EMBL" id="AF044668">
    <property type="protein sequence ID" value="AAC38646.1"/>
    <property type="molecule type" value="Genomic_DNA"/>
</dbReference>
<dbReference type="EMBL" id="AE006468">
    <property type="protein sequence ID" value="AAL20120.1"/>
    <property type="molecule type" value="Genomic_DNA"/>
</dbReference>
<dbReference type="RefSeq" id="NP_460161.1">
    <property type="nucleotide sequence ID" value="NC_003197.2"/>
</dbReference>
<dbReference type="RefSeq" id="WP_000290727.1">
    <property type="nucleotide sequence ID" value="NC_003197.2"/>
</dbReference>
<dbReference type="SMR" id="P0A7N6"/>
<dbReference type="STRING" id="99287.STM1191"/>
<dbReference type="PaxDb" id="99287-STM1191"/>
<dbReference type="GeneID" id="1252709"/>
<dbReference type="GeneID" id="93776319"/>
<dbReference type="KEGG" id="stm:STM1191"/>
<dbReference type="HOGENOM" id="CLU_129084_2_1_6"/>
<dbReference type="OMA" id="GMHRAHD"/>
<dbReference type="PhylomeDB" id="P0A7N6"/>
<dbReference type="BioCyc" id="SENT99287:STM1191-MONOMER"/>
<dbReference type="Proteomes" id="UP000001014">
    <property type="component" value="Chromosome"/>
</dbReference>
<dbReference type="GO" id="GO:0022625">
    <property type="term" value="C:cytosolic large ribosomal subunit"/>
    <property type="evidence" value="ECO:0000318"/>
    <property type="project" value="GO_Central"/>
</dbReference>
<dbReference type="GO" id="GO:0003735">
    <property type="term" value="F:structural constituent of ribosome"/>
    <property type="evidence" value="ECO:0000318"/>
    <property type="project" value="GO_Central"/>
</dbReference>
<dbReference type="GO" id="GO:0006412">
    <property type="term" value="P:translation"/>
    <property type="evidence" value="ECO:0007669"/>
    <property type="project" value="UniProtKB-UniRule"/>
</dbReference>
<dbReference type="HAMAP" id="MF_00340">
    <property type="entry name" value="Ribosomal_bL32"/>
    <property type="match status" value="1"/>
</dbReference>
<dbReference type="InterPro" id="IPR002677">
    <property type="entry name" value="Ribosomal_bL32"/>
</dbReference>
<dbReference type="InterPro" id="IPR044957">
    <property type="entry name" value="Ribosomal_bL32_bact"/>
</dbReference>
<dbReference type="InterPro" id="IPR011332">
    <property type="entry name" value="Ribosomal_zn-bd"/>
</dbReference>
<dbReference type="NCBIfam" id="TIGR01031">
    <property type="entry name" value="rpmF_bact"/>
    <property type="match status" value="1"/>
</dbReference>
<dbReference type="PANTHER" id="PTHR35534">
    <property type="entry name" value="50S RIBOSOMAL PROTEIN L32"/>
    <property type="match status" value="1"/>
</dbReference>
<dbReference type="PANTHER" id="PTHR35534:SF1">
    <property type="entry name" value="LARGE RIBOSOMAL SUBUNIT PROTEIN BL32"/>
    <property type="match status" value="1"/>
</dbReference>
<dbReference type="Pfam" id="PF01783">
    <property type="entry name" value="Ribosomal_L32p"/>
    <property type="match status" value="1"/>
</dbReference>
<dbReference type="SUPFAM" id="SSF57829">
    <property type="entry name" value="Zn-binding ribosomal proteins"/>
    <property type="match status" value="1"/>
</dbReference>
<proteinExistence type="inferred from homology"/>
<reference key="1">
    <citation type="journal article" date="1998" name="J. Bacteriol.">
        <title>Transcriptional analysis of essential genes of the Escherichia coli fatty acid biosynthesis gene cluster by functional replacement with the analogous Salmonella typhimurium gene cluster.</title>
        <authorList>
            <person name="Zhang Y."/>
            <person name="Cronan J.E. Jr."/>
        </authorList>
    </citation>
    <scope>NUCLEOTIDE SEQUENCE [GENOMIC DNA]</scope>
    <source>
        <strain>LT2</strain>
    </source>
</reference>
<reference key="2">
    <citation type="journal article" date="2001" name="Nature">
        <title>Complete genome sequence of Salmonella enterica serovar Typhimurium LT2.</title>
        <authorList>
            <person name="McClelland M."/>
            <person name="Sanderson K.E."/>
            <person name="Spieth J."/>
            <person name="Clifton S.W."/>
            <person name="Latreille P."/>
            <person name="Courtney L."/>
            <person name="Porwollik S."/>
            <person name="Ali J."/>
            <person name="Dante M."/>
            <person name="Du F."/>
            <person name="Hou S."/>
            <person name="Layman D."/>
            <person name="Leonard S."/>
            <person name="Nguyen C."/>
            <person name="Scott K."/>
            <person name="Holmes A."/>
            <person name="Grewal N."/>
            <person name="Mulvaney E."/>
            <person name="Ryan E."/>
            <person name="Sun H."/>
            <person name="Florea L."/>
            <person name="Miller W."/>
            <person name="Stoneking T."/>
            <person name="Nhan M."/>
            <person name="Waterston R."/>
            <person name="Wilson R.K."/>
        </authorList>
    </citation>
    <scope>NUCLEOTIDE SEQUENCE [LARGE SCALE GENOMIC DNA]</scope>
    <source>
        <strain>LT2 / SGSC1412 / ATCC 700720</strain>
    </source>
</reference>
<evidence type="ECO:0000250" key="1"/>
<evidence type="ECO:0000256" key="2">
    <source>
        <dbReference type="SAM" id="MobiDB-lite"/>
    </source>
</evidence>
<evidence type="ECO:0000305" key="3"/>
<sequence>MAVQQNKPTRSKRGMRRSHDALTAVTSLSVDKTSGEKHLRHHITADGYYRGRKVIAK</sequence>
<name>RL32_SALTY</name>
<keyword id="KW-1185">Reference proteome</keyword>
<keyword id="KW-0687">Ribonucleoprotein</keyword>
<keyword id="KW-0689">Ribosomal protein</keyword>
<comment type="similarity">
    <text evidence="3">Belongs to the bacterial ribosomal protein bL32 family.</text>
</comment>
<protein>
    <recommendedName>
        <fullName evidence="3">Large ribosomal subunit protein bL32</fullName>
    </recommendedName>
    <alternativeName>
        <fullName>50S ribosomal protein L32</fullName>
    </alternativeName>
</protein>
<accession>P0A7N6</accession>
<accession>P02435</accession>